<proteinExistence type="evidence at protein level"/>
<accession>P63033</accession>
<accession>Q9WVD3</accession>
<name>RHES_RAT</name>
<gene>
    <name type="primary">Rasd2</name>
</gene>
<sequence>MMKTLSSGNCTLNVPAKNSYRMVVLGASRVGKSSIVSRFLNGRFEDQYTPTIEDFHRKVYNIHGDMYQLDILDTSGNHPFPAMRRLSILTGDVFILVFSLDSRESFDEVKRLQKQILEVKSCLKNKTKEAAELPMVICGNKNDHSELCRQVPAMEAELLVSGDENCAYFEVSAKKNTNVNEMFYVLFSMAKLPHEMSPALHHKISVQYGDAFHPRPFCMRRTKVAGAYGMVSPFARRPSVNSDLKYIKAKVLREGQARERDKCSIQ</sequence>
<keyword id="KW-1003">Cell membrane</keyword>
<keyword id="KW-0342">GTP-binding</keyword>
<keyword id="KW-0449">Lipoprotein</keyword>
<keyword id="KW-0472">Membrane</keyword>
<keyword id="KW-0488">Methylation</keyword>
<keyword id="KW-0547">Nucleotide-binding</keyword>
<keyword id="KW-0636">Prenylation</keyword>
<keyword id="KW-1185">Reference proteome</keyword>
<comment type="function">
    <text evidence="2 4 5 8 9">GTPase signaling protein that binds to and hydrolyzes GTP. Regulates signaling pathways involving G-proteins-coupled receptor and heterotrimeric proteins such as GNB1, GNB2 and GNB3. May be involved in selected striatal competencies, mainly locomotor activity and motor coordination.</text>
</comment>
<comment type="subunit">
    <text evidence="1 5 9 10">Monomer (Potential). Interacts with GNB1, GNB2 and GNB3 (By similarity). Interacts with PIK3CA and UBE2I.</text>
</comment>
<comment type="subcellular location">
    <subcellularLocation>
        <location evidence="5 9">Cell membrane</location>
        <topology evidence="5 9">Lipid-anchor</topology>
    </subcellularLocation>
    <text>Found in granular structures throughout the cytosol.</text>
</comment>
<comment type="tissue specificity">
    <text evidence="2 3 6 7 8">Prominently expressed in the striatum, weakly in the cerebral cortex and the CA fields of the hippocampus. Highly expressed in the hippocampus and cerebellum, only during the postnatal period. Also expressed in pancreatic endocrine cells (islets of Langerhans), adrenal gland and stomach and in a thyroid cell line.</text>
</comment>
<comment type="developmental stage">
    <text>Low levels detected at 16 dpc through P10, and increased between P10 and P15 during the development of brain; the amount did decrease in the adult brain.</text>
</comment>
<comment type="induction">
    <text evidence="3 7">By thyroid hormone, efaroxan and glibenclamide.</text>
</comment>
<comment type="PTM">
    <text>Farnesylated. Farnesylation is required for membrane targeting.</text>
</comment>
<comment type="similarity">
    <text evidence="10">Belongs to the small GTPase superfamily. RasD family.</text>
</comment>
<organism>
    <name type="scientific">Rattus norvegicus</name>
    <name type="common">Rat</name>
    <dbReference type="NCBI Taxonomy" id="10116"/>
    <lineage>
        <taxon>Eukaryota</taxon>
        <taxon>Metazoa</taxon>
        <taxon>Chordata</taxon>
        <taxon>Craniata</taxon>
        <taxon>Vertebrata</taxon>
        <taxon>Euteleostomi</taxon>
        <taxon>Mammalia</taxon>
        <taxon>Eutheria</taxon>
        <taxon>Euarchontoglires</taxon>
        <taxon>Glires</taxon>
        <taxon>Rodentia</taxon>
        <taxon>Myomorpha</taxon>
        <taxon>Muroidea</taxon>
        <taxon>Muridae</taxon>
        <taxon>Murinae</taxon>
        <taxon>Rattus</taxon>
    </lineage>
</organism>
<protein>
    <recommendedName>
        <fullName>GTP-binding protein Rhes</fullName>
    </recommendedName>
    <alternativeName>
        <fullName>Ras homolog enriched in striatum</fullName>
    </alternativeName>
    <alternativeName>
        <fullName>SE6C</fullName>
    </alternativeName>
</protein>
<dbReference type="EMBL" id="AF134409">
    <property type="protein sequence ID" value="AAD38928.1"/>
    <property type="molecule type" value="mRNA"/>
</dbReference>
<dbReference type="RefSeq" id="NP_598252.1">
    <property type="nucleotide sequence ID" value="NM_133568.2"/>
</dbReference>
<dbReference type="SMR" id="P63033"/>
<dbReference type="FunCoup" id="P63033">
    <property type="interactions" value="408"/>
</dbReference>
<dbReference type="STRING" id="10116.ENSRNOP00000020017"/>
<dbReference type="PhosphoSitePlus" id="P63033"/>
<dbReference type="PaxDb" id="10116-ENSRNOP00000020017"/>
<dbReference type="Ensembl" id="ENSRNOT00000020017.4">
    <property type="protein sequence ID" value="ENSRNOP00000020017.2"/>
    <property type="gene ID" value="ENSRNOG00000014761.4"/>
</dbReference>
<dbReference type="GeneID" id="171099"/>
<dbReference type="KEGG" id="rno:171099"/>
<dbReference type="UCSC" id="RGD:628594">
    <property type="organism name" value="rat"/>
</dbReference>
<dbReference type="AGR" id="RGD:628594"/>
<dbReference type="CTD" id="23551"/>
<dbReference type="RGD" id="628594">
    <property type="gene designation" value="Rasd2"/>
</dbReference>
<dbReference type="eggNOG" id="KOG0395">
    <property type="taxonomic scope" value="Eukaryota"/>
</dbReference>
<dbReference type="GeneTree" id="ENSGT00940000161129"/>
<dbReference type="HOGENOM" id="CLU_041217_9_3_1"/>
<dbReference type="InParanoid" id="P63033"/>
<dbReference type="OMA" id="CLKNRTK"/>
<dbReference type="OrthoDB" id="265044at2759"/>
<dbReference type="PhylomeDB" id="P63033"/>
<dbReference type="TreeFam" id="TF316238"/>
<dbReference type="PRO" id="PR:P63033"/>
<dbReference type="Proteomes" id="UP000002494">
    <property type="component" value="Chromosome 19"/>
</dbReference>
<dbReference type="Bgee" id="ENSRNOG00000014761">
    <property type="expression patterns" value="Expressed in frontal cortex and 17 other cell types or tissues"/>
</dbReference>
<dbReference type="GO" id="GO:0005886">
    <property type="term" value="C:plasma membrane"/>
    <property type="evidence" value="ECO:0000314"/>
    <property type="project" value="UniProtKB"/>
</dbReference>
<dbReference type="GO" id="GO:0045202">
    <property type="term" value="C:synapse"/>
    <property type="evidence" value="ECO:0007669"/>
    <property type="project" value="GOC"/>
</dbReference>
<dbReference type="GO" id="GO:0031681">
    <property type="term" value="F:G-protein beta-subunit binding"/>
    <property type="evidence" value="ECO:0000266"/>
    <property type="project" value="RGD"/>
</dbReference>
<dbReference type="GO" id="GO:0005525">
    <property type="term" value="F:GTP binding"/>
    <property type="evidence" value="ECO:0000314"/>
    <property type="project" value="MGI"/>
</dbReference>
<dbReference type="GO" id="GO:0003924">
    <property type="term" value="F:GTPase activity"/>
    <property type="evidence" value="ECO:0007669"/>
    <property type="project" value="InterPro"/>
</dbReference>
<dbReference type="GO" id="GO:0043548">
    <property type="term" value="F:phosphatidylinositol 3-kinase binding"/>
    <property type="evidence" value="ECO:0000353"/>
    <property type="project" value="UniProtKB"/>
</dbReference>
<dbReference type="GO" id="GO:0031624">
    <property type="term" value="F:ubiquitin conjugating enzyme binding"/>
    <property type="evidence" value="ECO:0000353"/>
    <property type="project" value="UniProtKB"/>
</dbReference>
<dbReference type="GO" id="GO:0007626">
    <property type="term" value="P:locomotory behavior"/>
    <property type="evidence" value="ECO:0000250"/>
    <property type="project" value="UniProtKB"/>
</dbReference>
<dbReference type="GO" id="GO:0031397">
    <property type="term" value="P:negative regulation of protein ubiquitination"/>
    <property type="evidence" value="ECO:0000314"/>
    <property type="project" value="UniProtKB"/>
</dbReference>
<dbReference type="GO" id="GO:0051897">
    <property type="term" value="P:positive regulation of phosphatidylinositol 3-kinase/protein kinase B signal transduction"/>
    <property type="evidence" value="ECO:0000314"/>
    <property type="project" value="UniProtKB"/>
</dbReference>
<dbReference type="GO" id="GO:0033235">
    <property type="term" value="P:positive regulation of protein sumoylation"/>
    <property type="evidence" value="ECO:0000314"/>
    <property type="project" value="UniProtKB"/>
</dbReference>
<dbReference type="GO" id="GO:0007165">
    <property type="term" value="P:signal transduction"/>
    <property type="evidence" value="ECO:0000318"/>
    <property type="project" value="GO_Central"/>
</dbReference>
<dbReference type="GO" id="GO:0001963">
    <property type="term" value="P:synaptic transmission, dopaminergic"/>
    <property type="evidence" value="ECO:0000266"/>
    <property type="project" value="RGD"/>
</dbReference>
<dbReference type="CDD" id="cd04143">
    <property type="entry name" value="Rhes_like"/>
    <property type="match status" value="1"/>
</dbReference>
<dbReference type="FunFam" id="3.40.50.300:FF:000475">
    <property type="entry name" value="GTP-binding protein Rhes"/>
    <property type="match status" value="1"/>
</dbReference>
<dbReference type="Gene3D" id="3.40.50.300">
    <property type="entry name" value="P-loop containing nucleotide triphosphate hydrolases"/>
    <property type="match status" value="1"/>
</dbReference>
<dbReference type="InterPro" id="IPR027417">
    <property type="entry name" value="P-loop_NTPase"/>
</dbReference>
<dbReference type="InterPro" id="IPR005225">
    <property type="entry name" value="Small_GTP-bd"/>
</dbReference>
<dbReference type="InterPro" id="IPR001806">
    <property type="entry name" value="Small_GTPase"/>
</dbReference>
<dbReference type="InterPro" id="IPR052236">
    <property type="entry name" value="Small_GTPase_RasD"/>
</dbReference>
<dbReference type="NCBIfam" id="TIGR00231">
    <property type="entry name" value="small_GTP"/>
    <property type="match status" value="1"/>
</dbReference>
<dbReference type="PANTHER" id="PTHR46149:SF1">
    <property type="entry name" value="GTP-BINDING PROTEIN RHES"/>
    <property type="match status" value="1"/>
</dbReference>
<dbReference type="PANTHER" id="PTHR46149">
    <property type="entry name" value="MIP08469P"/>
    <property type="match status" value="1"/>
</dbReference>
<dbReference type="Pfam" id="PF00071">
    <property type="entry name" value="Ras"/>
    <property type="match status" value="1"/>
</dbReference>
<dbReference type="PRINTS" id="PR00449">
    <property type="entry name" value="RASTRNSFRMNG"/>
</dbReference>
<dbReference type="SMART" id="SM00175">
    <property type="entry name" value="RAB"/>
    <property type="match status" value="1"/>
</dbReference>
<dbReference type="SMART" id="SM00176">
    <property type="entry name" value="RAN"/>
    <property type="match status" value="1"/>
</dbReference>
<dbReference type="SMART" id="SM00173">
    <property type="entry name" value="RAS"/>
    <property type="match status" value="1"/>
</dbReference>
<dbReference type="SMART" id="SM00174">
    <property type="entry name" value="RHO"/>
    <property type="match status" value="1"/>
</dbReference>
<dbReference type="SUPFAM" id="SSF52540">
    <property type="entry name" value="P-loop containing nucleoside triphosphate hydrolases"/>
    <property type="match status" value="1"/>
</dbReference>
<dbReference type="PROSITE" id="PS51421">
    <property type="entry name" value="RAS"/>
    <property type="match status" value="1"/>
</dbReference>
<feature type="chain" id="PRO_0000082722" description="GTP-binding protein Rhes">
    <location>
        <begin position="1"/>
        <end position="263"/>
    </location>
</feature>
<feature type="propeptide" id="PRO_0000281377" description="Removed in mature form" evidence="1">
    <location>
        <begin position="264"/>
        <end position="266"/>
    </location>
</feature>
<feature type="region of interest" description="Interaction with GNB1, GNB2 and GNB3" evidence="1">
    <location>
        <begin position="189"/>
        <end position="235"/>
    </location>
</feature>
<feature type="short sequence motif" description="Effector region">
    <location>
        <begin position="48"/>
        <end position="56"/>
    </location>
</feature>
<feature type="binding site" evidence="1">
    <location>
        <begin position="26"/>
        <end position="33"/>
    </location>
    <ligand>
        <name>GTP</name>
        <dbReference type="ChEBI" id="CHEBI:37565"/>
    </ligand>
</feature>
<feature type="binding site" evidence="1">
    <location>
        <begin position="73"/>
        <end position="77"/>
    </location>
    <ligand>
        <name>GTP</name>
        <dbReference type="ChEBI" id="CHEBI:37565"/>
    </ligand>
</feature>
<feature type="binding site" evidence="1">
    <location>
        <begin position="140"/>
        <end position="143"/>
    </location>
    <ligand>
        <name>GTP</name>
        <dbReference type="ChEBI" id="CHEBI:37565"/>
    </ligand>
</feature>
<feature type="modified residue" description="Cysteine methyl ester" evidence="1">
    <location>
        <position position="263"/>
    </location>
</feature>
<feature type="lipid moiety-binding region" description="S-farnesyl cysteine" evidence="5">
    <location>
        <position position="263"/>
    </location>
</feature>
<feature type="mutagenesis site" description="Loss of plasma membrane localization." evidence="5 9">
    <original>C</original>
    <variation>A</variation>
    <location>
        <position position="263"/>
    </location>
</feature>
<feature type="mutagenesis site" description="Rather found in granular structures translocated to the nucleus." evidence="5 9">
    <original>C</original>
    <variation>S</variation>
    <location>
        <position position="263"/>
    </location>
</feature>
<evidence type="ECO:0000250" key="1"/>
<evidence type="ECO:0000269" key="2">
    <source>
    </source>
</evidence>
<evidence type="ECO:0000269" key="3">
    <source>
    </source>
</evidence>
<evidence type="ECO:0000269" key="4">
    <source>
    </source>
</evidence>
<evidence type="ECO:0000269" key="5">
    <source>
    </source>
</evidence>
<evidence type="ECO:0000269" key="6">
    <source>
    </source>
</evidence>
<evidence type="ECO:0000269" key="7">
    <source>
    </source>
</evidence>
<evidence type="ECO:0000269" key="8">
    <source>
    </source>
</evidence>
<evidence type="ECO:0000269" key="9">
    <source>
    </source>
</evidence>
<evidence type="ECO:0000305" key="10"/>
<reference key="1">
    <citation type="journal article" date="1999" name="J. Neurosci. Res.">
        <title>Rhes: a striatal-specific Ras homolog related to Dexras1.</title>
        <authorList>
            <person name="Falk J.D."/>
            <person name="Vargiu P."/>
            <person name="Foye P.E."/>
            <person name="Usui H."/>
            <person name="Perez J."/>
            <person name="Danielson P.E."/>
            <person name="Lerner D.L."/>
            <person name="Bernal J."/>
            <person name="Sutcliffe J.G."/>
        </authorList>
    </citation>
    <scope>NUCLEOTIDE SEQUENCE [MRNA]</scope>
    <scope>FUNCTION</scope>
    <scope>TISSUE SPECIFICITY</scope>
    <scope>GTP-BINDING</scope>
    <source>
        <strain>Sprague-Dawley</strain>
        <tissue>Corpus striatum</tissue>
    </source>
</reference>
<reference key="2">
    <citation type="journal article" date="2002" name="Br. J. Pharmacol.">
        <title>Identification of the monomeric G-protein, Rhes, as an efaroxan-regulated protein in the pancreatic beta-cell.</title>
        <authorList>
            <person name="Chan S.L.F."/>
            <person name="Monks L.K."/>
            <person name="Gao H."/>
            <person name="Deaville P."/>
            <person name="Morgan N.G."/>
        </authorList>
    </citation>
    <scope>NUCLEOTIDE SEQUENCE [MRNA]</scope>
    <scope>FUNCTION</scope>
</reference>
<reference key="3">
    <citation type="journal article" date="2001" name="Brain Res. Mol. Brain Res.">
        <title>Thyroid hormone regulation of rhes, a novel Ras homolog gene expressed in the striatum.</title>
        <authorList>
            <person name="Vargiu P."/>
            <person name="Morte B."/>
            <person name="Manzano J."/>
            <person name="Perez J."/>
            <person name="de Abajo R."/>
            <person name="Sutcliffe J.G."/>
            <person name="Bernal J."/>
        </authorList>
    </citation>
    <scope>TISSUE SPECIFICITY</scope>
    <scope>INDUCTION BY THYROID HORMONE</scope>
</reference>
<reference key="4">
    <citation type="journal article" date="2004" name="Mol. Cell. Biol.">
        <title>Rhes is involved in striatal function.</title>
        <authorList>
            <person name="Spano D."/>
            <person name="Branchi I."/>
            <person name="Rosica A."/>
            <person name="Pirro M.T."/>
            <person name="Riccio A."/>
            <person name="Mithbaokar P."/>
            <person name="Affuso A."/>
            <person name="Arra C."/>
            <person name="Campolongo P."/>
            <person name="Terracciano D."/>
            <person name="Macchia V."/>
            <person name="Bernal J."/>
            <person name="Alleva E."/>
            <person name="Di Lauro R."/>
        </authorList>
    </citation>
    <scope>TISSUE SPECIFICITY</scope>
</reference>
<reference key="5">
    <citation type="journal article" date="2004" name="Oncogene">
        <title>The small GTP-binding protein, Rhes, regulates signal transduction from G protein-coupled receptors.</title>
        <authorList>
            <person name="Vargiu P."/>
            <person name="De Abajo R."/>
            <person name="Garcia-Ranea J.A."/>
            <person name="Valencia A."/>
            <person name="Santisteban P."/>
            <person name="Crespo P."/>
            <person name="Bernal J."/>
        </authorList>
    </citation>
    <scope>FUNCTION</scope>
    <scope>GTP-BINDING</scope>
    <scope>SUBCELLULAR LOCATION</scope>
    <scope>ISOPRENYLATION AT CYS-263</scope>
    <scope>MUTAGENESIS OF CYS-263</scope>
    <scope>INTERACTION WITH PIK3CA</scope>
</reference>
<reference key="6">
    <citation type="journal article" date="2006" name="Biochem. Biophys. Res. Commun.">
        <title>Rhes expression in pancreatic beta-cells is regulated by efaroxan in a calcium-dependent process.</title>
        <authorList>
            <person name="Taylor J.P."/>
            <person name="Jackson D.A."/>
            <person name="Morgan N.G."/>
            <person name="Chan S.L."/>
        </authorList>
    </citation>
    <scope>TISSUE SPECIFICITY</scope>
    <scope>INDUCTION BY EFAROXAN AND GLIBENCLAMIDE</scope>
</reference>
<reference key="7">
    <citation type="journal article" date="2008" name="Brain Res.">
        <title>Ontogeny and dopaminergic regulation in brain of Ras homolog enriched in striatum (Rhes).</title>
        <authorList>
            <person name="Harrison L.M."/>
            <person name="Lahoste G.J."/>
            <person name="Ruskin D.N."/>
        </authorList>
    </citation>
    <scope>FUNCTION</scope>
    <scope>TISSUE SPECIFICITY</scope>
</reference>
<reference key="8">
    <citation type="journal article" date="2009" name="Science">
        <title>Rhes, a striatal specific protein, mediates mutant-huntingtin cytotoxicity.</title>
        <authorList>
            <person name="Subramaniam S."/>
            <person name="Sixt K.M."/>
            <person name="Barrow R."/>
            <person name="Snyder S.H."/>
        </authorList>
    </citation>
    <scope>FUNCTION</scope>
    <scope>INTERACTION WITH UBE2I</scope>
    <scope>SUBCELLULAR LOCATION</scope>
    <scope>MUTAGENESIS OF CYS-263</scope>
</reference>